<sequence length="202" mass="22226">MAKQIFYTLFLFLLSTAILTASSSAPRAAITSKRAINFIQASCKATTYPTVCVNSLTGYANSIQTSPRRLAETALNVTVTQAQSTKVFVWRLGRFTSLKKREIQAVKDCIEEIHDAVDRLTMSIHEVKMCGSAKGRDQFWFHMSNAQTWTSAALTNANTCSDGFAGRVMDGRVKNSVRARILNLGRGTSNALALINAFAKKY</sequence>
<organism>
    <name type="scientific">Arabidopsis thaliana</name>
    <name type="common">Mouse-ear cress</name>
    <dbReference type="NCBI Taxonomy" id="3702"/>
    <lineage>
        <taxon>Eukaryota</taxon>
        <taxon>Viridiplantae</taxon>
        <taxon>Streptophyta</taxon>
        <taxon>Embryophyta</taxon>
        <taxon>Tracheophyta</taxon>
        <taxon>Spermatophyta</taxon>
        <taxon>Magnoliopsida</taxon>
        <taxon>eudicotyledons</taxon>
        <taxon>Gunneridae</taxon>
        <taxon>Pentapetalae</taxon>
        <taxon>rosids</taxon>
        <taxon>malvids</taxon>
        <taxon>Brassicales</taxon>
        <taxon>Brassicaceae</taxon>
        <taxon>Camelineae</taxon>
        <taxon>Arabidopsis</taxon>
    </lineage>
</organism>
<proteinExistence type="evidence at transcript level"/>
<feature type="signal peptide" evidence="2">
    <location>
        <begin position="1"/>
        <end position="21"/>
    </location>
</feature>
<feature type="chain" id="PRO_5008430396" description="Pectinesterase inhibitor 11">
    <location>
        <begin position="22"/>
        <end position="202"/>
    </location>
</feature>
<feature type="glycosylation site" description="N-linked (GlcNAc...) asparagine" evidence="3">
    <location>
        <position position="76"/>
    </location>
</feature>
<feature type="disulfide bond" evidence="1">
    <location>
        <begin position="43"/>
        <end position="52"/>
    </location>
</feature>
<feature type="disulfide bond" evidence="1">
    <location>
        <begin position="109"/>
        <end position="160"/>
    </location>
</feature>
<evidence type="ECO:0000250" key="1">
    <source>
        <dbReference type="UniProtKB" id="Q9LNF2"/>
    </source>
</evidence>
<evidence type="ECO:0000255" key="2"/>
<evidence type="ECO:0000255" key="3">
    <source>
        <dbReference type="PROSITE-ProRule" id="PRU00498"/>
    </source>
</evidence>
<evidence type="ECO:0000269" key="4">
    <source>
    </source>
</evidence>
<evidence type="ECO:0000303" key="5">
    <source>
    </source>
</evidence>
<evidence type="ECO:0000305" key="6"/>
<evidence type="ECO:0000312" key="7">
    <source>
        <dbReference type="Araport" id="AT3G47380"/>
    </source>
</evidence>
<evidence type="ECO:0000312" key="8">
    <source>
        <dbReference type="EMBL" id="CAB51210.1"/>
    </source>
</evidence>
<name>PMI11_ARATH</name>
<gene>
    <name evidence="5" type="primary">PMEI11</name>
    <name evidence="7" type="ordered locus">At3g47380</name>
    <name evidence="8" type="ORF">T21L8.130</name>
</gene>
<dbReference type="EMBL" id="AL096860">
    <property type="protein sequence ID" value="CAB51210.1"/>
    <property type="molecule type" value="Genomic_DNA"/>
</dbReference>
<dbReference type="EMBL" id="CP002686">
    <property type="protein sequence ID" value="AEE78274.1"/>
    <property type="molecule type" value="Genomic_DNA"/>
</dbReference>
<dbReference type="PIR" id="T12993">
    <property type="entry name" value="T12993"/>
</dbReference>
<dbReference type="RefSeq" id="NP_190322.1">
    <property type="nucleotide sequence ID" value="NM_114606.3"/>
</dbReference>
<dbReference type="SMR" id="Q9STY5"/>
<dbReference type="FunCoup" id="Q9STY5">
    <property type="interactions" value="44"/>
</dbReference>
<dbReference type="STRING" id="3702.Q9STY5"/>
<dbReference type="GlyCosmos" id="Q9STY5">
    <property type="glycosylation" value="1 site, No reported glycans"/>
</dbReference>
<dbReference type="GlyGen" id="Q9STY5">
    <property type="glycosylation" value="1 site"/>
</dbReference>
<dbReference type="PaxDb" id="3702-AT3G47380.1"/>
<dbReference type="ProteomicsDB" id="234749"/>
<dbReference type="EnsemblPlants" id="AT3G47380.1">
    <property type="protein sequence ID" value="AT3G47380.1"/>
    <property type="gene ID" value="AT3G47380"/>
</dbReference>
<dbReference type="GeneID" id="823892"/>
<dbReference type="Gramene" id="AT3G47380.1">
    <property type="protein sequence ID" value="AT3G47380.1"/>
    <property type="gene ID" value="AT3G47380"/>
</dbReference>
<dbReference type="KEGG" id="ath:AT3G47380"/>
<dbReference type="Araport" id="AT3G47380"/>
<dbReference type="TAIR" id="AT3G47380">
    <property type="gene designation" value="ATPMEI11"/>
</dbReference>
<dbReference type="eggNOG" id="ENOG502QXIN">
    <property type="taxonomic scope" value="Eukaryota"/>
</dbReference>
<dbReference type="HOGENOM" id="CLU_033761_0_2_1"/>
<dbReference type="InParanoid" id="Q9STY5"/>
<dbReference type="OMA" id="KMCGSAK"/>
<dbReference type="PhylomeDB" id="Q9STY5"/>
<dbReference type="PRO" id="PR:Q9STY5"/>
<dbReference type="Proteomes" id="UP000006548">
    <property type="component" value="Chromosome 3"/>
</dbReference>
<dbReference type="ExpressionAtlas" id="Q9STY5">
    <property type="expression patterns" value="baseline and differential"/>
</dbReference>
<dbReference type="GO" id="GO:0048046">
    <property type="term" value="C:apoplast"/>
    <property type="evidence" value="ECO:0000314"/>
    <property type="project" value="UniProtKB"/>
</dbReference>
<dbReference type="GO" id="GO:0046910">
    <property type="term" value="F:pectinesterase inhibitor activity"/>
    <property type="evidence" value="ECO:0000314"/>
    <property type="project" value="UniProtKB"/>
</dbReference>
<dbReference type="GO" id="GO:0071669">
    <property type="term" value="P:plant-type cell wall organization or biogenesis"/>
    <property type="evidence" value="ECO:0000315"/>
    <property type="project" value="UniProtKB"/>
</dbReference>
<dbReference type="CDD" id="cd15798">
    <property type="entry name" value="PMEI-like_3"/>
    <property type="match status" value="1"/>
</dbReference>
<dbReference type="FunFam" id="1.20.140.40:FF:000005">
    <property type="entry name" value="Pectin methylesterase inhibitor 1"/>
    <property type="match status" value="1"/>
</dbReference>
<dbReference type="Gene3D" id="1.20.140.40">
    <property type="entry name" value="Invertase/pectin methylesterase inhibitor family protein"/>
    <property type="match status" value="1"/>
</dbReference>
<dbReference type="InterPro" id="IPR035513">
    <property type="entry name" value="Invertase/methylesterase_inhib"/>
</dbReference>
<dbReference type="InterPro" id="IPR006501">
    <property type="entry name" value="Pectinesterase_inhib_dom"/>
</dbReference>
<dbReference type="InterPro" id="IPR051955">
    <property type="entry name" value="PME_Inhibitor"/>
</dbReference>
<dbReference type="NCBIfam" id="TIGR01614">
    <property type="entry name" value="PME_inhib"/>
    <property type="match status" value="1"/>
</dbReference>
<dbReference type="PANTHER" id="PTHR31080:SF192">
    <property type="entry name" value="PECTINESTERASE INHIBITOR 11"/>
    <property type="match status" value="1"/>
</dbReference>
<dbReference type="PANTHER" id="PTHR31080">
    <property type="entry name" value="PECTINESTERASE INHIBITOR-LIKE"/>
    <property type="match status" value="1"/>
</dbReference>
<dbReference type="Pfam" id="PF04043">
    <property type="entry name" value="PMEI"/>
    <property type="match status" value="1"/>
</dbReference>
<dbReference type="SMART" id="SM00856">
    <property type="entry name" value="PMEI"/>
    <property type="match status" value="1"/>
</dbReference>
<dbReference type="SUPFAM" id="SSF101148">
    <property type="entry name" value="Plant invertase/pectin methylesterase inhibitor"/>
    <property type="match status" value="1"/>
</dbReference>
<accession>Q9STY5</accession>
<keyword id="KW-0052">Apoplast</keyword>
<keyword id="KW-1015">Disulfide bond</keyword>
<keyword id="KW-0325">Glycoprotein</keyword>
<keyword id="KW-1185">Reference proteome</keyword>
<keyword id="KW-0964">Secreted</keyword>
<keyword id="KW-0732">Signal</keyword>
<comment type="function">
    <text evidence="4">Pectin methylesterase (PME) inhibitor involved in the maintenance of cell wall integrity in response to necrotrophic pathogens. Modulates PME activity and pectin methylesterification during infection by Botrytis cinerea and contributes to resistance against the pathogen.</text>
</comment>
<comment type="subcellular location">
    <subcellularLocation>
        <location evidence="4">Secreted</location>
        <location evidence="4">Extracellular space</location>
        <location evidence="4">Apoplast</location>
    </subcellularLocation>
</comment>
<comment type="induction">
    <text evidence="4">Induced in leaves during infection by Botrytis cinerea.</text>
</comment>
<comment type="disruption phenotype">
    <text evidence="4">No visible phenotype under normal growth conditions, but mutant plants have enhanced susceptibility to infection by the necrotrophic pathogen Botrytis cinerea.</text>
</comment>
<comment type="similarity">
    <text evidence="6">Belongs to the PMEI family.</text>
</comment>
<protein>
    <recommendedName>
        <fullName evidence="6">Pectinesterase inhibitor 11</fullName>
    </recommendedName>
    <alternativeName>
        <fullName evidence="5">Pectin methylesterase inhibitor 11</fullName>
        <shortName evidence="5">AtPMEI11</shortName>
    </alternativeName>
</protein>
<reference key="1">
    <citation type="journal article" date="2000" name="Nature">
        <title>Sequence and analysis of chromosome 3 of the plant Arabidopsis thaliana.</title>
        <authorList>
            <person name="Salanoubat M."/>
            <person name="Lemcke K."/>
            <person name="Rieger M."/>
            <person name="Ansorge W."/>
            <person name="Unseld M."/>
            <person name="Fartmann B."/>
            <person name="Valle G."/>
            <person name="Bloecker H."/>
            <person name="Perez-Alonso M."/>
            <person name="Obermaier B."/>
            <person name="Delseny M."/>
            <person name="Boutry M."/>
            <person name="Grivell L.A."/>
            <person name="Mache R."/>
            <person name="Puigdomenech P."/>
            <person name="De Simone V."/>
            <person name="Choisne N."/>
            <person name="Artiguenave F."/>
            <person name="Robert C."/>
            <person name="Brottier P."/>
            <person name="Wincker P."/>
            <person name="Cattolico L."/>
            <person name="Weissenbach J."/>
            <person name="Saurin W."/>
            <person name="Quetier F."/>
            <person name="Schaefer M."/>
            <person name="Mueller-Auer S."/>
            <person name="Gabel C."/>
            <person name="Fuchs M."/>
            <person name="Benes V."/>
            <person name="Wurmbach E."/>
            <person name="Drzonek H."/>
            <person name="Erfle H."/>
            <person name="Jordan N."/>
            <person name="Bangert S."/>
            <person name="Wiedelmann R."/>
            <person name="Kranz H."/>
            <person name="Voss H."/>
            <person name="Holland R."/>
            <person name="Brandt P."/>
            <person name="Nyakatura G."/>
            <person name="Vezzi A."/>
            <person name="D'Angelo M."/>
            <person name="Pallavicini A."/>
            <person name="Toppo S."/>
            <person name="Simionati B."/>
            <person name="Conrad A."/>
            <person name="Hornischer K."/>
            <person name="Kauer G."/>
            <person name="Loehnert T.-H."/>
            <person name="Nordsiek G."/>
            <person name="Reichelt J."/>
            <person name="Scharfe M."/>
            <person name="Schoen O."/>
            <person name="Bargues M."/>
            <person name="Terol J."/>
            <person name="Climent J."/>
            <person name="Navarro P."/>
            <person name="Collado C."/>
            <person name="Perez-Perez A."/>
            <person name="Ottenwaelder B."/>
            <person name="Duchemin D."/>
            <person name="Cooke R."/>
            <person name="Laudie M."/>
            <person name="Berger-Llauro C."/>
            <person name="Purnelle B."/>
            <person name="Masuy D."/>
            <person name="de Haan M."/>
            <person name="Maarse A.C."/>
            <person name="Alcaraz J.-P."/>
            <person name="Cottet A."/>
            <person name="Casacuberta E."/>
            <person name="Monfort A."/>
            <person name="Argiriou A."/>
            <person name="Flores M."/>
            <person name="Liguori R."/>
            <person name="Vitale D."/>
            <person name="Mannhaupt G."/>
            <person name="Haase D."/>
            <person name="Schoof H."/>
            <person name="Rudd S."/>
            <person name="Zaccaria P."/>
            <person name="Mewes H.-W."/>
            <person name="Mayer K.F.X."/>
            <person name="Kaul S."/>
            <person name="Town C.D."/>
            <person name="Koo H.L."/>
            <person name="Tallon L.J."/>
            <person name="Jenkins J."/>
            <person name="Rooney T."/>
            <person name="Rizzo M."/>
            <person name="Walts A."/>
            <person name="Utterback T."/>
            <person name="Fujii C.Y."/>
            <person name="Shea T.P."/>
            <person name="Creasy T.H."/>
            <person name="Haas B."/>
            <person name="Maiti R."/>
            <person name="Wu D."/>
            <person name="Peterson J."/>
            <person name="Van Aken S."/>
            <person name="Pai G."/>
            <person name="Militscher J."/>
            <person name="Sellers P."/>
            <person name="Gill J.E."/>
            <person name="Feldblyum T.V."/>
            <person name="Preuss D."/>
            <person name="Lin X."/>
            <person name="Nierman W.C."/>
            <person name="Salzberg S.L."/>
            <person name="White O."/>
            <person name="Venter J.C."/>
            <person name="Fraser C.M."/>
            <person name="Kaneko T."/>
            <person name="Nakamura Y."/>
            <person name="Sato S."/>
            <person name="Kato T."/>
            <person name="Asamizu E."/>
            <person name="Sasamoto S."/>
            <person name="Kimura T."/>
            <person name="Idesawa K."/>
            <person name="Kawashima K."/>
            <person name="Kishida Y."/>
            <person name="Kiyokawa C."/>
            <person name="Kohara M."/>
            <person name="Matsumoto M."/>
            <person name="Matsuno A."/>
            <person name="Muraki A."/>
            <person name="Nakayama S."/>
            <person name="Nakazaki N."/>
            <person name="Shinpo S."/>
            <person name="Takeuchi C."/>
            <person name="Wada T."/>
            <person name="Watanabe A."/>
            <person name="Yamada M."/>
            <person name="Yasuda M."/>
            <person name="Tabata S."/>
        </authorList>
    </citation>
    <scope>NUCLEOTIDE SEQUENCE [LARGE SCALE GENOMIC DNA]</scope>
    <source>
        <strain>cv. Columbia</strain>
    </source>
</reference>
<reference key="2">
    <citation type="journal article" date="2017" name="Plant J.">
        <title>Araport11: a complete reannotation of the Arabidopsis thaliana reference genome.</title>
        <authorList>
            <person name="Cheng C.Y."/>
            <person name="Krishnakumar V."/>
            <person name="Chan A.P."/>
            <person name="Thibaud-Nissen F."/>
            <person name="Schobel S."/>
            <person name="Town C.D."/>
        </authorList>
    </citation>
    <scope>GENOME REANNOTATION</scope>
    <source>
        <strain>cv. Columbia</strain>
    </source>
</reference>
<reference key="3">
    <citation type="journal article" date="2017" name="Plant Physiol.">
        <title>Three pectin methyl esterase inhibitors protect cell wall integrity for immunity to Botrytis.</title>
        <authorList>
            <person name="Lionetti V."/>
            <person name="Fabri E."/>
            <person name="De Caroli M."/>
            <person name="Hansen A.R."/>
            <person name="Willats W.G."/>
            <person name="Piro G."/>
            <person name="Bellincampi D."/>
        </authorList>
    </citation>
    <scope>FUNCTION</scope>
    <scope>SUBCELLULAR LOCATION</scope>
    <scope>INDUCTION</scope>
    <scope>DISRUPTION PHENOTYPE</scope>
</reference>